<organism>
    <name type="scientific">Naegleria lovaniensis</name>
    <name type="common">Amoeba</name>
    <dbReference type="NCBI Taxonomy" id="51637"/>
    <lineage>
        <taxon>Eukaryota</taxon>
        <taxon>Discoba</taxon>
        <taxon>Heterolobosea</taxon>
        <taxon>Tetramitia</taxon>
        <taxon>Eutetramitia</taxon>
        <taxon>Vahlkampfiidae</taxon>
        <taxon>Naegleria</taxon>
    </lineage>
</organism>
<protein>
    <recommendedName>
        <fullName>Unknown protein NLV016 from 2D-PAGE</fullName>
    </recommendedName>
</protein>
<sequence>MITVPHVVNLNLTGQWRENGGQI</sequence>
<reference key="1">
    <citation type="submission" date="2003-05" db="UniProtKB">
        <title>Comparative study of protein profiles on pathogenic and nonpathogenic Naegleria species by 2D-PAGE.</title>
        <authorList>
            <person name="Omura M."/>
            <person name="Furushima-Shimogawara R."/>
            <person name="Izumiyama S."/>
            <person name="Endo T."/>
        </authorList>
    </citation>
    <scope>PROTEIN SEQUENCE</scope>
    <source>
        <strain>Aq / 9 / 1 / 45D</strain>
    </source>
</reference>
<comment type="miscellaneous">
    <text>On the 2D-gel the determined pI of this unknown protein is: 6.9, its MW is: 19.8 kDa.</text>
</comment>
<proteinExistence type="evidence at protein level"/>
<keyword id="KW-0903">Direct protein sequencing</keyword>
<accession>P83599</accession>
<feature type="chain" id="PRO_0000055499" description="Unknown protein NLV016 from 2D-PAGE">
    <location>
        <begin position="1"/>
        <end position="23" status="greater than"/>
    </location>
</feature>
<feature type="non-terminal residue">
    <location>
        <position position="23"/>
    </location>
</feature>
<name>NL16_NAELO</name>